<evidence type="ECO:0000255" key="1">
    <source>
        <dbReference type="HAMAP-Rule" id="MF_01656"/>
    </source>
</evidence>
<evidence type="ECO:0000305" key="2"/>
<dbReference type="EC" id="4.1.3.39" evidence="1"/>
<dbReference type="EMBL" id="U13232">
    <property type="protein sequence ID" value="AAA89107.1"/>
    <property type="molecule type" value="Genomic_DNA"/>
</dbReference>
<dbReference type="RefSeq" id="NP_863098.1">
    <property type="nucleotide sequence ID" value="NC_004999.1"/>
</dbReference>
<dbReference type="SMR" id="P51017"/>
<dbReference type="BRENDA" id="4.1.3.39">
    <property type="organism ID" value="5092"/>
</dbReference>
<dbReference type="UniPathway" id="UPA00082"/>
<dbReference type="GO" id="GO:0003852">
    <property type="term" value="F:2-isopropylmalate synthase activity"/>
    <property type="evidence" value="ECO:0007669"/>
    <property type="project" value="TreeGrafter"/>
</dbReference>
<dbReference type="GO" id="GO:0008701">
    <property type="term" value="F:4-hydroxy-2-oxovalerate aldolase activity"/>
    <property type="evidence" value="ECO:0007669"/>
    <property type="project" value="UniProtKB-UniRule"/>
</dbReference>
<dbReference type="GO" id="GO:0030145">
    <property type="term" value="F:manganese ion binding"/>
    <property type="evidence" value="ECO:0007669"/>
    <property type="project" value="UniProtKB-UniRule"/>
</dbReference>
<dbReference type="GO" id="GO:0009056">
    <property type="term" value="P:catabolic process"/>
    <property type="evidence" value="ECO:0007669"/>
    <property type="project" value="UniProtKB-KW"/>
</dbReference>
<dbReference type="GO" id="GO:0009098">
    <property type="term" value="P:L-leucine biosynthetic process"/>
    <property type="evidence" value="ECO:0007669"/>
    <property type="project" value="TreeGrafter"/>
</dbReference>
<dbReference type="CDD" id="cd07943">
    <property type="entry name" value="DRE_TIM_HOA"/>
    <property type="match status" value="1"/>
</dbReference>
<dbReference type="Gene3D" id="1.10.8.60">
    <property type="match status" value="1"/>
</dbReference>
<dbReference type="Gene3D" id="3.20.20.70">
    <property type="entry name" value="Aldolase class I"/>
    <property type="match status" value="1"/>
</dbReference>
<dbReference type="HAMAP" id="MF_01656">
    <property type="entry name" value="HOA"/>
    <property type="match status" value="1"/>
</dbReference>
<dbReference type="InterPro" id="IPR050073">
    <property type="entry name" value="2-IPM_HCS-like"/>
</dbReference>
<dbReference type="InterPro" id="IPR017629">
    <property type="entry name" value="4OH_2_O-val_aldolase"/>
</dbReference>
<dbReference type="InterPro" id="IPR013785">
    <property type="entry name" value="Aldolase_TIM"/>
</dbReference>
<dbReference type="InterPro" id="IPR012425">
    <property type="entry name" value="DmpG_comm"/>
</dbReference>
<dbReference type="InterPro" id="IPR035685">
    <property type="entry name" value="DRE_TIM_HOA"/>
</dbReference>
<dbReference type="InterPro" id="IPR000891">
    <property type="entry name" value="PYR_CT"/>
</dbReference>
<dbReference type="NCBIfam" id="TIGR03217">
    <property type="entry name" value="4OH_2_O_val_ald"/>
    <property type="match status" value="1"/>
</dbReference>
<dbReference type="NCBIfam" id="NF006049">
    <property type="entry name" value="PRK08195.1"/>
    <property type="match status" value="1"/>
</dbReference>
<dbReference type="PANTHER" id="PTHR10277:SF9">
    <property type="entry name" value="2-ISOPROPYLMALATE SYNTHASE 1, CHLOROPLASTIC-RELATED"/>
    <property type="match status" value="1"/>
</dbReference>
<dbReference type="PANTHER" id="PTHR10277">
    <property type="entry name" value="HOMOCITRATE SYNTHASE-RELATED"/>
    <property type="match status" value="1"/>
</dbReference>
<dbReference type="Pfam" id="PF07836">
    <property type="entry name" value="DmpG_comm"/>
    <property type="match status" value="1"/>
</dbReference>
<dbReference type="Pfam" id="PF00682">
    <property type="entry name" value="HMGL-like"/>
    <property type="match status" value="1"/>
</dbReference>
<dbReference type="SUPFAM" id="SSF51569">
    <property type="entry name" value="Aldolase"/>
    <property type="match status" value="1"/>
</dbReference>
<dbReference type="SUPFAM" id="SSF89000">
    <property type="entry name" value="post-HMGL domain-like"/>
    <property type="match status" value="1"/>
</dbReference>
<dbReference type="PROSITE" id="PS50991">
    <property type="entry name" value="PYR_CT"/>
    <property type="match status" value="1"/>
</dbReference>
<comment type="catalytic activity">
    <reaction evidence="1">
        <text>(S)-4-hydroxy-2-oxopentanoate = acetaldehyde + pyruvate</text>
        <dbReference type="Rhea" id="RHEA:22624"/>
        <dbReference type="ChEBI" id="CHEBI:15343"/>
        <dbReference type="ChEBI" id="CHEBI:15361"/>
        <dbReference type="ChEBI" id="CHEBI:73143"/>
        <dbReference type="EC" id="4.1.3.39"/>
    </reaction>
</comment>
<comment type="pathway">
    <text>Aromatic compound metabolism; naphthalene degradation.</text>
</comment>
<comment type="similarity">
    <text evidence="1 2">Belongs to the 4-hydroxy-2-oxovalerate aldolase family.</text>
</comment>
<reference key="1">
    <citation type="journal article" date="1995" name="Microbiology">
        <title>The 4-hydroxy-2-oxovalerate aldolase and acetaldehyde dehydrogenase (acylating) encoded by the nahM and nahO genes of the naphthalene catabolic plasmid pWW60-22 provide further evidence of conservation of meta-cleavage pathway gene sequences.</title>
        <authorList>
            <person name="Platt A."/>
            <person name="Shingler V."/>
            <person name="Taylor S.C."/>
            <person name="Williams P.A."/>
        </authorList>
    </citation>
    <scope>NUCLEOTIDE SEQUENCE [GENOMIC DNA]</scope>
    <source>
        <strain>DSM 8368 / NCIMB 9816 / PG</strain>
    </source>
</reference>
<gene>
    <name type="primary">nahM</name>
</gene>
<proteinExistence type="inferred from homology"/>
<protein>
    <recommendedName>
        <fullName evidence="1">4-hydroxy-2-oxovalerate aldolase</fullName>
        <shortName evidence="1">HOA</shortName>
        <ecNumber evidence="1">4.1.3.39</ecNumber>
    </recommendedName>
    <alternativeName>
        <fullName evidence="1">4-hydroxy-2-keto-pentanoic acid aldolase</fullName>
    </alternativeName>
    <alternativeName>
        <fullName evidence="1">4-hydroxy-2-oxopentanoate aldolase</fullName>
    </alternativeName>
</protein>
<geneLocation type="plasmid">
    <name>pWW60-22</name>
</geneLocation>
<feature type="chain" id="PRO_0000096706" description="4-hydroxy-2-oxovalerate aldolase">
    <location>
        <begin position="1"/>
        <end position="346"/>
    </location>
</feature>
<feature type="domain" description="Pyruvate carboxyltransferase" evidence="1">
    <location>
        <begin position="8"/>
        <end position="260"/>
    </location>
</feature>
<feature type="active site" description="Proton acceptor" evidence="1">
    <location>
        <position position="20"/>
    </location>
</feature>
<feature type="binding site" evidence="1">
    <location>
        <begin position="16"/>
        <end position="17"/>
    </location>
    <ligand>
        <name>substrate</name>
    </ligand>
</feature>
<feature type="binding site" evidence="1">
    <location>
        <position position="17"/>
    </location>
    <ligand>
        <name>Mn(2+)</name>
        <dbReference type="ChEBI" id="CHEBI:29035"/>
    </ligand>
</feature>
<feature type="binding site" evidence="1">
    <location>
        <position position="170"/>
    </location>
    <ligand>
        <name>substrate</name>
    </ligand>
</feature>
<feature type="binding site" evidence="1">
    <location>
        <position position="199"/>
    </location>
    <ligand>
        <name>Mn(2+)</name>
        <dbReference type="ChEBI" id="CHEBI:29035"/>
    </ligand>
</feature>
<feature type="binding site" evidence="1">
    <location>
        <position position="199"/>
    </location>
    <ligand>
        <name>substrate</name>
    </ligand>
</feature>
<feature type="binding site" evidence="1">
    <location>
        <position position="201"/>
    </location>
    <ligand>
        <name>Mn(2+)</name>
        <dbReference type="ChEBI" id="CHEBI:29035"/>
    </ligand>
</feature>
<feature type="binding site" evidence="1">
    <location>
        <position position="290"/>
    </location>
    <ligand>
        <name>substrate</name>
    </ligand>
</feature>
<feature type="site" description="Transition state stabilizer" evidence="1">
    <location>
        <position position="16"/>
    </location>
</feature>
<keyword id="KW-0058">Aromatic hydrocarbons catabolism</keyword>
<keyword id="KW-0456">Lyase</keyword>
<keyword id="KW-0464">Manganese</keyword>
<keyword id="KW-0479">Metal-binding</keyword>
<keyword id="KW-0614">Plasmid</keyword>
<sequence length="346" mass="37102">MNLHGKSVILHDMSLRDGMHAKRHQISLEQMVAVATGLDQAGMPLIEITHGDGLGGRSINYGFPAHSDEEYLRAVIPQLKQAKVSALLLPGIGTVDHLKMALDCGVSTIRVATHCTEADVSEQHIGMARKLGVDTVGFLMMAHMISAEKVLEQAKLMESYGANCIYCTDSAGYMLPDEVSEKIGLLRAELNPATEVGFHGHHNMGMAIANSLAAIEAGAARIDGSVAGLGAGAGNTPLEVFVAVCKRMGVETGIDLYKIMDVAEDLVVPMMDQPIRVDRDALTLGYAGVYSSFLLFAQRAEKKYGVSARDILVELGRRGTVGGQEDMIEDLALDMARARQQQKVSA</sequence>
<accession>P51017</accession>
<organism>
    <name type="scientific">Pseudomonas putida</name>
    <name type="common">Arthrobacter siderocapsulatus</name>
    <dbReference type="NCBI Taxonomy" id="303"/>
    <lineage>
        <taxon>Bacteria</taxon>
        <taxon>Pseudomonadati</taxon>
        <taxon>Pseudomonadota</taxon>
        <taxon>Gammaproteobacteria</taxon>
        <taxon>Pseudomonadales</taxon>
        <taxon>Pseudomonadaceae</taxon>
        <taxon>Pseudomonas</taxon>
    </lineage>
</organism>
<name>HOA1_PSEPU</name>